<protein>
    <recommendedName>
        <fullName evidence="1">Glucose-6-phosphate isomerase</fullName>
        <shortName evidence="1">GPI</shortName>
        <ecNumber evidence="1">5.3.1.9</ecNumber>
    </recommendedName>
    <alternativeName>
        <fullName evidence="1">Phosphoglucose isomerase</fullName>
        <shortName evidence="1">PGI</shortName>
    </alternativeName>
    <alternativeName>
        <fullName evidence="1">Phosphohexose isomerase</fullName>
        <shortName evidence="1">PHI</shortName>
    </alternativeName>
</protein>
<reference key="1">
    <citation type="journal article" date="2003" name="Nature">
        <title>The genome sequence of Bacillus anthracis Ames and comparison to closely related bacteria.</title>
        <authorList>
            <person name="Read T.D."/>
            <person name="Peterson S.N."/>
            <person name="Tourasse N.J."/>
            <person name="Baillie L.W."/>
            <person name="Paulsen I.T."/>
            <person name="Nelson K.E."/>
            <person name="Tettelin H."/>
            <person name="Fouts D.E."/>
            <person name="Eisen J.A."/>
            <person name="Gill S.R."/>
            <person name="Holtzapple E.K."/>
            <person name="Okstad O.A."/>
            <person name="Helgason E."/>
            <person name="Rilstone J."/>
            <person name="Wu M."/>
            <person name="Kolonay J.F."/>
            <person name="Beanan M.J."/>
            <person name="Dodson R.J."/>
            <person name="Brinkac L.M."/>
            <person name="Gwinn M.L."/>
            <person name="DeBoy R.T."/>
            <person name="Madpu R."/>
            <person name="Daugherty S.C."/>
            <person name="Durkin A.S."/>
            <person name="Haft D.H."/>
            <person name="Nelson W.C."/>
            <person name="Peterson J.D."/>
            <person name="Pop M."/>
            <person name="Khouri H.M."/>
            <person name="Radune D."/>
            <person name="Benton J.L."/>
            <person name="Mahamoud Y."/>
            <person name="Jiang L."/>
            <person name="Hance I.R."/>
            <person name="Weidman J.F."/>
            <person name="Berry K.J."/>
            <person name="Plaut R.D."/>
            <person name="Wolf A.M."/>
            <person name="Watkins K.L."/>
            <person name="Nierman W.C."/>
            <person name="Hazen A."/>
            <person name="Cline R.T."/>
            <person name="Redmond C."/>
            <person name="Thwaite J.E."/>
            <person name="White O."/>
            <person name="Salzberg S.L."/>
            <person name="Thomason B."/>
            <person name="Friedlander A.M."/>
            <person name="Koehler T.M."/>
            <person name="Hanna P.C."/>
            <person name="Kolstoe A.-B."/>
            <person name="Fraser C.M."/>
        </authorList>
    </citation>
    <scope>NUCLEOTIDE SEQUENCE [LARGE SCALE GENOMIC DNA]</scope>
    <source>
        <strain>Ames / isolate Porton</strain>
    </source>
</reference>
<reference key="2">
    <citation type="journal article" date="2009" name="J. Bacteriol.">
        <title>The complete genome sequence of Bacillus anthracis Ames 'Ancestor'.</title>
        <authorList>
            <person name="Ravel J."/>
            <person name="Jiang L."/>
            <person name="Stanley S.T."/>
            <person name="Wilson M.R."/>
            <person name="Decker R.S."/>
            <person name="Read T.D."/>
            <person name="Worsham P."/>
            <person name="Keim P.S."/>
            <person name="Salzberg S.L."/>
            <person name="Fraser-Liggett C.M."/>
            <person name="Rasko D.A."/>
        </authorList>
    </citation>
    <scope>NUCLEOTIDE SEQUENCE [LARGE SCALE GENOMIC DNA]</scope>
    <source>
        <strain>Ames ancestor</strain>
    </source>
</reference>
<reference key="3">
    <citation type="submission" date="2004-01" db="EMBL/GenBank/DDBJ databases">
        <title>Complete genome sequence of Bacillus anthracis Sterne.</title>
        <authorList>
            <person name="Brettin T.S."/>
            <person name="Bruce D."/>
            <person name="Challacombe J.F."/>
            <person name="Gilna P."/>
            <person name="Han C."/>
            <person name="Hill K."/>
            <person name="Hitchcock P."/>
            <person name="Jackson P."/>
            <person name="Keim P."/>
            <person name="Longmire J."/>
            <person name="Lucas S."/>
            <person name="Okinaka R."/>
            <person name="Richardson P."/>
            <person name="Rubin E."/>
            <person name="Tice H."/>
        </authorList>
    </citation>
    <scope>NUCLEOTIDE SEQUENCE [LARGE SCALE GENOMIC DNA]</scope>
    <source>
        <strain>Sterne</strain>
    </source>
</reference>
<sequence length="450" mass="50345">MSTHVTFDYSKALSFIGEHEITYLRDAVKVTHHAIHEKTGAGNDFLGWVDLPLQYDKEEFARIQKCAEKIKNDSDILLVVGIGGSYLGARAAIEMLNHSFYNTLSKEQRKTPQVLFVGQNISSTYMKDLMDVLEGKDFSINVISKSGTTTEPALAFRIFRKLLEEKYGKEEARKRIYATTDKARGALKTLADNEGYETFVIPDDVGGRFSVLTPVGLLPIAVSGLNIEEMMKGAAAGRDDFGTSELEENPAYQYAVVRNALYNKGKTIEMLINYEPALQYFAEWWKQLFGESEGKDQKGIFPSSANFSTDLHSLGQYVQEGRRDLFETVLKVGKSTHELTIESEENDLDGLNYLAGETVDFVNTKAYEGTLLAHSDGGVPNLIVNIPELNEYTFGYLVYFFEKACAMSGYLLGVNPFDQPGVEAYKKNMFALLGKPGFEELKAELEERLK</sequence>
<evidence type="ECO:0000255" key="1">
    <source>
        <dbReference type="HAMAP-Rule" id="MF_00473"/>
    </source>
</evidence>
<evidence type="ECO:0007829" key="2">
    <source>
        <dbReference type="PDB" id="3IFS"/>
    </source>
</evidence>
<name>G6PI_BACAN</name>
<keyword id="KW-0002">3D-structure</keyword>
<keyword id="KW-0963">Cytoplasm</keyword>
<keyword id="KW-0312">Gluconeogenesis</keyword>
<keyword id="KW-0324">Glycolysis</keyword>
<keyword id="KW-0413">Isomerase</keyword>
<keyword id="KW-0597">Phosphoprotein</keyword>
<keyword id="KW-1185">Reference proteome</keyword>
<organism>
    <name type="scientific">Bacillus anthracis</name>
    <dbReference type="NCBI Taxonomy" id="1392"/>
    <lineage>
        <taxon>Bacteria</taxon>
        <taxon>Bacillati</taxon>
        <taxon>Bacillota</taxon>
        <taxon>Bacilli</taxon>
        <taxon>Bacillales</taxon>
        <taxon>Bacillaceae</taxon>
        <taxon>Bacillus</taxon>
        <taxon>Bacillus cereus group</taxon>
    </lineage>
</organism>
<accession>Q81K75</accession>
<accession>Q6HRM8</accession>
<accession>Q6KKZ2</accession>
<dbReference type="EC" id="5.3.1.9" evidence="1"/>
<dbReference type="EMBL" id="AE016879">
    <property type="protein sequence ID" value="AAP28802.1"/>
    <property type="molecule type" value="Genomic_DNA"/>
</dbReference>
<dbReference type="EMBL" id="AE017334">
    <property type="protein sequence ID" value="AAT34259.1"/>
    <property type="molecule type" value="Genomic_DNA"/>
</dbReference>
<dbReference type="EMBL" id="AE017225">
    <property type="protein sequence ID" value="AAT57060.1"/>
    <property type="molecule type" value="Genomic_DNA"/>
</dbReference>
<dbReference type="RefSeq" id="NP_847316.1">
    <property type="nucleotide sequence ID" value="NC_003997.3"/>
</dbReference>
<dbReference type="RefSeq" id="WP_000103657.1">
    <property type="nucleotide sequence ID" value="NZ_WXXJ01000017.1"/>
</dbReference>
<dbReference type="RefSeq" id="YP_031010.1">
    <property type="nucleotide sequence ID" value="NC_005945.1"/>
</dbReference>
<dbReference type="PDB" id="3IFS">
    <property type="method" value="X-ray"/>
    <property type="resolution" value="2.00 A"/>
    <property type="chains" value="A/B/C/D/E/F=1-450"/>
</dbReference>
<dbReference type="PDBsum" id="3IFS"/>
<dbReference type="SMR" id="Q81K75"/>
<dbReference type="IntAct" id="Q81K75">
    <property type="interactions" value="1"/>
</dbReference>
<dbReference type="STRING" id="261594.GBAA_5130"/>
<dbReference type="DNASU" id="1084495"/>
<dbReference type="GeneID" id="45024758"/>
<dbReference type="KEGG" id="ban:BA_5130"/>
<dbReference type="KEGG" id="banh:HYU01_25100"/>
<dbReference type="KEGG" id="bar:GBAA_5130"/>
<dbReference type="KEGG" id="bat:BAS4767"/>
<dbReference type="PATRIC" id="fig|198094.11.peg.5091"/>
<dbReference type="eggNOG" id="COG0166">
    <property type="taxonomic scope" value="Bacteria"/>
</dbReference>
<dbReference type="HOGENOM" id="CLU_037303_0_1_9"/>
<dbReference type="OMA" id="CPAYAYG"/>
<dbReference type="OrthoDB" id="140919at2"/>
<dbReference type="UniPathway" id="UPA00109">
    <property type="reaction ID" value="UER00181"/>
</dbReference>
<dbReference type="UniPathway" id="UPA00138"/>
<dbReference type="EvolutionaryTrace" id="Q81K75"/>
<dbReference type="Proteomes" id="UP000000427">
    <property type="component" value="Chromosome"/>
</dbReference>
<dbReference type="Proteomes" id="UP000000594">
    <property type="component" value="Chromosome"/>
</dbReference>
<dbReference type="GO" id="GO:0005829">
    <property type="term" value="C:cytosol"/>
    <property type="evidence" value="ECO:0007669"/>
    <property type="project" value="TreeGrafter"/>
</dbReference>
<dbReference type="GO" id="GO:0097367">
    <property type="term" value="F:carbohydrate derivative binding"/>
    <property type="evidence" value="ECO:0007669"/>
    <property type="project" value="InterPro"/>
</dbReference>
<dbReference type="GO" id="GO:0004347">
    <property type="term" value="F:glucose-6-phosphate isomerase activity"/>
    <property type="evidence" value="ECO:0007669"/>
    <property type="project" value="UniProtKB-UniRule"/>
</dbReference>
<dbReference type="GO" id="GO:0048029">
    <property type="term" value="F:monosaccharide binding"/>
    <property type="evidence" value="ECO:0007669"/>
    <property type="project" value="TreeGrafter"/>
</dbReference>
<dbReference type="GO" id="GO:0006094">
    <property type="term" value="P:gluconeogenesis"/>
    <property type="evidence" value="ECO:0007669"/>
    <property type="project" value="UniProtKB-UniRule"/>
</dbReference>
<dbReference type="GO" id="GO:0051156">
    <property type="term" value="P:glucose 6-phosphate metabolic process"/>
    <property type="evidence" value="ECO:0007669"/>
    <property type="project" value="TreeGrafter"/>
</dbReference>
<dbReference type="GO" id="GO:0006096">
    <property type="term" value="P:glycolytic process"/>
    <property type="evidence" value="ECO:0007669"/>
    <property type="project" value="UniProtKB-UniRule"/>
</dbReference>
<dbReference type="CDD" id="cd05015">
    <property type="entry name" value="SIS_PGI_1"/>
    <property type="match status" value="1"/>
</dbReference>
<dbReference type="CDD" id="cd05016">
    <property type="entry name" value="SIS_PGI_2"/>
    <property type="match status" value="1"/>
</dbReference>
<dbReference type="FunFam" id="3.40.50.10490:FF:000015">
    <property type="entry name" value="Glucose-6-phosphate isomerase"/>
    <property type="match status" value="1"/>
</dbReference>
<dbReference type="FunFam" id="3.40.50.10490:FF:000016">
    <property type="entry name" value="Glucose-6-phosphate isomerase"/>
    <property type="match status" value="1"/>
</dbReference>
<dbReference type="FunFam" id="3.40.50.10490:FF:000020">
    <property type="entry name" value="Glucose-6-phosphate isomerase"/>
    <property type="match status" value="1"/>
</dbReference>
<dbReference type="Gene3D" id="3.40.50.10490">
    <property type="entry name" value="Glucose-6-phosphate isomerase like protein, domain 1"/>
    <property type="match status" value="3"/>
</dbReference>
<dbReference type="HAMAP" id="MF_00473">
    <property type="entry name" value="G6P_isomerase"/>
    <property type="match status" value="1"/>
</dbReference>
<dbReference type="InterPro" id="IPR001672">
    <property type="entry name" value="G6P_Isomerase"/>
</dbReference>
<dbReference type="InterPro" id="IPR018189">
    <property type="entry name" value="Phosphoglucose_isomerase_CS"/>
</dbReference>
<dbReference type="InterPro" id="IPR046348">
    <property type="entry name" value="SIS_dom_sf"/>
</dbReference>
<dbReference type="InterPro" id="IPR035476">
    <property type="entry name" value="SIS_PGI_1"/>
</dbReference>
<dbReference type="InterPro" id="IPR035482">
    <property type="entry name" value="SIS_PGI_2"/>
</dbReference>
<dbReference type="NCBIfam" id="NF010697">
    <property type="entry name" value="PRK14097.1"/>
    <property type="match status" value="1"/>
</dbReference>
<dbReference type="PANTHER" id="PTHR11469">
    <property type="entry name" value="GLUCOSE-6-PHOSPHATE ISOMERASE"/>
    <property type="match status" value="1"/>
</dbReference>
<dbReference type="PANTHER" id="PTHR11469:SF1">
    <property type="entry name" value="GLUCOSE-6-PHOSPHATE ISOMERASE"/>
    <property type="match status" value="1"/>
</dbReference>
<dbReference type="Pfam" id="PF00342">
    <property type="entry name" value="PGI"/>
    <property type="match status" value="1"/>
</dbReference>
<dbReference type="PRINTS" id="PR00662">
    <property type="entry name" value="G6PISOMERASE"/>
</dbReference>
<dbReference type="SUPFAM" id="SSF53697">
    <property type="entry name" value="SIS domain"/>
    <property type="match status" value="1"/>
</dbReference>
<dbReference type="PROSITE" id="PS00765">
    <property type="entry name" value="P_GLUCOSE_ISOMERASE_1"/>
    <property type="match status" value="1"/>
</dbReference>
<dbReference type="PROSITE" id="PS00174">
    <property type="entry name" value="P_GLUCOSE_ISOMERASE_2"/>
    <property type="match status" value="1"/>
</dbReference>
<dbReference type="PROSITE" id="PS51463">
    <property type="entry name" value="P_GLUCOSE_ISOMERASE_3"/>
    <property type="match status" value="1"/>
</dbReference>
<gene>
    <name evidence="1" type="primary">pgi</name>
    <name type="ordered locus">BA_5130</name>
    <name type="ordered locus">GBAA_5130</name>
    <name type="ordered locus">BAS4767</name>
</gene>
<proteinExistence type="evidence at protein level"/>
<comment type="function">
    <text evidence="1">Catalyzes the reversible isomerization of glucose-6-phosphate to fructose-6-phosphate.</text>
</comment>
<comment type="catalytic activity">
    <reaction evidence="1">
        <text>alpha-D-glucose 6-phosphate = beta-D-fructose 6-phosphate</text>
        <dbReference type="Rhea" id="RHEA:11816"/>
        <dbReference type="ChEBI" id="CHEBI:57634"/>
        <dbReference type="ChEBI" id="CHEBI:58225"/>
        <dbReference type="EC" id="5.3.1.9"/>
    </reaction>
</comment>
<comment type="pathway">
    <text evidence="1">Carbohydrate biosynthesis; gluconeogenesis.</text>
</comment>
<comment type="pathway">
    <text evidence="1">Carbohydrate degradation; glycolysis; D-glyceraldehyde 3-phosphate and glycerone phosphate from D-glucose: step 2/4.</text>
</comment>
<comment type="subcellular location">
    <subcellularLocation>
        <location evidence="1">Cytoplasm</location>
    </subcellularLocation>
</comment>
<comment type="similarity">
    <text evidence="1">Belongs to the GPI family.</text>
</comment>
<feature type="chain" id="PRO_0000180584" description="Glucose-6-phosphate isomerase">
    <location>
        <begin position="1"/>
        <end position="450"/>
    </location>
</feature>
<feature type="active site" description="Proton donor" evidence="1">
    <location>
        <position position="291"/>
    </location>
</feature>
<feature type="active site" evidence="1">
    <location>
        <position position="312"/>
    </location>
</feature>
<feature type="active site" evidence="1">
    <location>
        <position position="426"/>
    </location>
</feature>
<feature type="modified residue" description="Phosphothreonine" evidence="1">
    <location>
        <position position="39"/>
    </location>
</feature>
<feature type="strand" evidence="2">
    <location>
        <begin position="4"/>
        <end position="8"/>
    </location>
</feature>
<feature type="helix" evidence="2">
    <location>
        <begin position="10"/>
        <end position="12"/>
    </location>
</feature>
<feature type="turn" evidence="2">
    <location>
        <begin position="13"/>
        <end position="15"/>
    </location>
</feature>
<feature type="helix" evidence="2">
    <location>
        <begin position="18"/>
        <end position="22"/>
    </location>
</feature>
<feature type="helix" evidence="2">
    <location>
        <begin position="25"/>
        <end position="37"/>
    </location>
</feature>
<feature type="helix" evidence="2">
    <location>
        <begin position="43"/>
        <end position="45"/>
    </location>
</feature>
<feature type="turn" evidence="2">
    <location>
        <begin position="47"/>
        <end position="50"/>
    </location>
</feature>
<feature type="helix" evidence="2">
    <location>
        <begin position="51"/>
        <end position="54"/>
    </location>
</feature>
<feature type="helix" evidence="2">
    <location>
        <begin position="57"/>
        <end position="73"/>
    </location>
</feature>
<feature type="strand" evidence="2">
    <location>
        <begin position="75"/>
        <end position="80"/>
    </location>
</feature>
<feature type="helix" evidence="2">
    <location>
        <begin position="83"/>
        <end position="85"/>
    </location>
</feature>
<feature type="helix" evidence="2">
    <location>
        <begin position="87"/>
        <end position="96"/>
    </location>
</feature>
<feature type="helix" evidence="2">
    <location>
        <begin position="101"/>
        <end position="103"/>
    </location>
</feature>
<feature type="helix" evidence="2">
    <location>
        <begin position="106"/>
        <end position="109"/>
    </location>
</feature>
<feature type="strand" evidence="2">
    <location>
        <begin position="113"/>
        <end position="120"/>
    </location>
</feature>
<feature type="helix" evidence="2">
    <location>
        <begin position="123"/>
        <end position="133"/>
    </location>
</feature>
<feature type="strand" evidence="2">
    <location>
        <begin position="138"/>
        <end position="143"/>
    </location>
</feature>
<feature type="strand" evidence="2">
    <location>
        <begin position="145"/>
        <end position="147"/>
    </location>
</feature>
<feature type="helix" evidence="2">
    <location>
        <begin position="150"/>
        <end position="167"/>
    </location>
</feature>
<feature type="helix" evidence="2">
    <location>
        <begin position="169"/>
        <end position="173"/>
    </location>
</feature>
<feature type="strand" evidence="2">
    <location>
        <begin position="176"/>
        <end position="180"/>
    </location>
</feature>
<feature type="helix" evidence="2">
    <location>
        <begin position="186"/>
        <end position="194"/>
    </location>
</feature>
<feature type="strand" evidence="2">
    <location>
        <begin position="197"/>
        <end position="200"/>
    </location>
</feature>
<feature type="helix" evidence="2">
    <location>
        <begin position="207"/>
        <end position="209"/>
    </location>
</feature>
<feature type="helix" evidence="2">
    <location>
        <begin position="214"/>
        <end position="222"/>
    </location>
</feature>
<feature type="helix" evidence="2">
    <location>
        <begin position="227"/>
        <end position="240"/>
    </location>
</feature>
<feature type="helix" evidence="2">
    <location>
        <begin position="246"/>
        <end position="248"/>
    </location>
</feature>
<feature type="helix" evidence="2">
    <location>
        <begin position="250"/>
        <end position="263"/>
    </location>
</feature>
<feature type="strand" evidence="2">
    <location>
        <begin position="268"/>
        <end position="275"/>
    </location>
</feature>
<feature type="helix" evidence="2">
    <location>
        <begin position="276"/>
        <end position="278"/>
    </location>
</feature>
<feature type="helix" evidence="2">
    <location>
        <begin position="279"/>
        <end position="293"/>
    </location>
</feature>
<feature type="strand" evidence="2">
    <location>
        <begin position="301"/>
        <end position="306"/>
    </location>
</feature>
<feature type="helix" evidence="2">
    <location>
        <begin position="309"/>
        <end position="312"/>
    </location>
</feature>
<feature type="helix" evidence="2">
    <location>
        <begin position="315"/>
        <end position="320"/>
    </location>
</feature>
<feature type="strand" evidence="2">
    <location>
        <begin position="325"/>
        <end position="334"/>
    </location>
</feature>
<feature type="helix" evidence="2">
    <location>
        <begin position="352"/>
        <end position="354"/>
    </location>
</feature>
<feature type="helix" evidence="2">
    <location>
        <begin position="359"/>
        <end position="376"/>
    </location>
</feature>
<feature type="strand" evidence="2">
    <location>
        <begin position="381"/>
        <end position="386"/>
    </location>
</feature>
<feature type="helix" evidence="2">
    <location>
        <begin position="391"/>
        <end position="412"/>
    </location>
</feature>
<feature type="helix" evidence="2">
    <location>
        <begin position="420"/>
        <end position="422"/>
    </location>
</feature>
<feature type="helix" evidence="2">
    <location>
        <begin position="423"/>
        <end position="433"/>
    </location>
</feature>
<feature type="helix" evidence="2">
    <location>
        <begin position="439"/>
        <end position="449"/>
    </location>
</feature>